<protein>
    <recommendedName>
        <fullName evidence="1">Crossover junction endodeoxyribonuclease RuvC</fullName>
        <ecNumber evidence="1">3.1.21.10</ecNumber>
    </recommendedName>
    <alternativeName>
        <fullName evidence="1">Holliday junction nuclease RuvC</fullName>
    </alternativeName>
    <alternativeName>
        <fullName evidence="1">Holliday junction resolvase RuvC</fullName>
    </alternativeName>
</protein>
<comment type="function">
    <text evidence="1">The RuvA-RuvB-RuvC complex processes Holliday junction (HJ) DNA during genetic recombination and DNA repair. Endonuclease that resolves HJ intermediates. Cleaves cruciform DNA by making single-stranded nicks across the HJ at symmetrical positions within the homologous arms, yielding a 5'-phosphate and a 3'-hydroxyl group; requires a central core of homology in the junction. The consensus cleavage sequence is 5'-(A/T)TT(C/G)-3'. Cleavage occurs on the 3'-side of the TT dinucleotide at the point of strand exchange. HJ branch migration catalyzed by RuvA-RuvB allows RuvC to scan DNA until it finds its consensus sequence, where it cleaves and resolves the cruciform DNA.</text>
</comment>
<comment type="catalytic activity">
    <reaction evidence="1">
        <text>Endonucleolytic cleavage at a junction such as a reciprocal single-stranded crossover between two homologous DNA duplexes (Holliday junction).</text>
        <dbReference type="EC" id="3.1.21.10"/>
    </reaction>
</comment>
<comment type="cofactor">
    <cofactor evidence="1">
        <name>Mg(2+)</name>
        <dbReference type="ChEBI" id="CHEBI:18420"/>
    </cofactor>
    <text evidence="1">Binds 2 Mg(2+) ion per subunit.</text>
</comment>
<comment type="subunit">
    <text evidence="1">Homodimer which binds Holliday junction (HJ) DNA. The HJ becomes 2-fold symmetrical on binding to RuvC with unstacked arms; it has a different conformation from HJ DNA in complex with RuvA. In the full resolvosome a probable DNA-RuvA(4)-RuvB(12)-RuvC(2) complex forms which resolves the HJ.</text>
</comment>
<comment type="subcellular location">
    <subcellularLocation>
        <location evidence="1">Cytoplasm</location>
    </subcellularLocation>
</comment>
<comment type="similarity">
    <text evidence="1">Belongs to the RuvC family.</text>
</comment>
<gene>
    <name evidence="1" type="primary">ruvC</name>
    <name type="ordered locus">CCA_00119</name>
</gene>
<proteinExistence type="inferred from homology"/>
<accession>Q824M6</accession>
<name>RUVC_CHLCV</name>
<organism>
    <name type="scientific">Chlamydia caviae (strain ATCC VR-813 / DSM 19441 / 03DC25 / GPIC)</name>
    <name type="common">Chlamydophila caviae</name>
    <dbReference type="NCBI Taxonomy" id="227941"/>
    <lineage>
        <taxon>Bacteria</taxon>
        <taxon>Pseudomonadati</taxon>
        <taxon>Chlamydiota</taxon>
        <taxon>Chlamydiia</taxon>
        <taxon>Chlamydiales</taxon>
        <taxon>Chlamydiaceae</taxon>
        <taxon>Chlamydia/Chlamydophila group</taxon>
        <taxon>Chlamydia</taxon>
    </lineage>
</organism>
<sequence length="168" mass="18352">MTQLIMGIDPGTLVSGYAIIHIEQRYKIRAHSYGAIRLSSKDSLTQRYKQLFQTLSGVLDDITPDAVVLETQYVHKNPQSTIKLGMARGVLILAAALRDIPVFEYAPNVAKRAVVGKGNASKQQVQLMVSKILNIPDVLNSNCEDIADAFALAICHAHTSAYTCLGVR</sequence>
<evidence type="ECO:0000255" key="1">
    <source>
        <dbReference type="HAMAP-Rule" id="MF_00034"/>
    </source>
</evidence>
<feature type="chain" id="PRO_0000183086" description="Crossover junction endodeoxyribonuclease RuvC">
    <location>
        <begin position="1"/>
        <end position="168"/>
    </location>
</feature>
<feature type="active site" evidence="1">
    <location>
        <position position="9"/>
    </location>
</feature>
<feature type="active site" evidence="1">
    <location>
        <position position="70"/>
    </location>
</feature>
<feature type="active site" evidence="1">
    <location>
        <position position="145"/>
    </location>
</feature>
<feature type="binding site" evidence="1">
    <location>
        <position position="9"/>
    </location>
    <ligand>
        <name>Mg(2+)</name>
        <dbReference type="ChEBI" id="CHEBI:18420"/>
        <label>1</label>
    </ligand>
</feature>
<feature type="binding site" evidence="1">
    <location>
        <position position="70"/>
    </location>
    <ligand>
        <name>Mg(2+)</name>
        <dbReference type="ChEBI" id="CHEBI:18420"/>
        <label>2</label>
    </ligand>
</feature>
<feature type="binding site" evidence="1">
    <location>
        <position position="145"/>
    </location>
    <ligand>
        <name>Mg(2+)</name>
        <dbReference type="ChEBI" id="CHEBI:18420"/>
        <label>1</label>
    </ligand>
</feature>
<keyword id="KW-0963">Cytoplasm</keyword>
<keyword id="KW-0227">DNA damage</keyword>
<keyword id="KW-0233">DNA recombination</keyword>
<keyword id="KW-0234">DNA repair</keyword>
<keyword id="KW-0238">DNA-binding</keyword>
<keyword id="KW-0255">Endonuclease</keyword>
<keyword id="KW-0378">Hydrolase</keyword>
<keyword id="KW-0460">Magnesium</keyword>
<keyword id="KW-0479">Metal-binding</keyword>
<keyword id="KW-0540">Nuclease</keyword>
<reference key="1">
    <citation type="journal article" date="2003" name="Nucleic Acids Res.">
        <title>Genome sequence of Chlamydophila caviae (Chlamydia psittaci GPIC): examining the role of niche-specific genes in the evolution of the Chlamydiaceae.</title>
        <authorList>
            <person name="Read T.D."/>
            <person name="Myers G.S.A."/>
            <person name="Brunham R.C."/>
            <person name="Nelson W.C."/>
            <person name="Paulsen I.T."/>
            <person name="Heidelberg J.F."/>
            <person name="Holtzapple E.K."/>
            <person name="Khouri H.M."/>
            <person name="Federova N.B."/>
            <person name="Carty H.A."/>
            <person name="Umayam L.A."/>
            <person name="Haft D.H."/>
            <person name="Peterson J.D."/>
            <person name="Beanan M.J."/>
            <person name="White O."/>
            <person name="Salzberg S.L."/>
            <person name="Hsia R.-C."/>
            <person name="McClarty G."/>
            <person name="Rank R.G."/>
            <person name="Bavoil P.M."/>
            <person name="Fraser C.M."/>
        </authorList>
    </citation>
    <scope>NUCLEOTIDE SEQUENCE [LARGE SCALE GENOMIC DNA]</scope>
    <source>
        <strain>ATCC VR-813 / DSM 19441 / 03DC25 / GPIC</strain>
    </source>
</reference>
<dbReference type="EC" id="3.1.21.10" evidence="1"/>
<dbReference type="EMBL" id="AE015925">
    <property type="protein sequence ID" value="AAP04871.1"/>
    <property type="molecule type" value="Genomic_DNA"/>
</dbReference>
<dbReference type="RefSeq" id="WP_011006092.1">
    <property type="nucleotide sequence ID" value="NC_003361.3"/>
</dbReference>
<dbReference type="SMR" id="Q824M6"/>
<dbReference type="STRING" id="227941.CCA_00119"/>
<dbReference type="KEGG" id="cca:CCA_00119"/>
<dbReference type="eggNOG" id="COG0817">
    <property type="taxonomic scope" value="Bacteria"/>
</dbReference>
<dbReference type="HOGENOM" id="CLU_091257_3_0_0"/>
<dbReference type="OrthoDB" id="9805499at2"/>
<dbReference type="Proteomes" id="UP000002193">
    <property type="component" value="Chromosome"/>
</dbReference>
<dbReference type="GO" id="GO:0005737">
    <property type="term" value="C:cytoplasm"/>
    <property type="evidence" value="ECO:0007669"/>
    <property type="project" value="UniProtKB-SubCell"/>
</dbReference>
<dbReference type="GO" id="GO:0048476">
    <property type="term" value="C:Holliday junction resolvase complex"/>
    <property type="evidence" value="ECO:0007669"/>
    <property type="project" value="UniProtKB-UniRule"/>
</dbReference>
<dbReference type="GO" id="GO:0008821">
    <property type="term" value="F:crossover junction DNA endonuclease activity"/>
    <property type="evidence" value="ECO:0007669"/>
    <property type="project" value="UniProtKB-UniRule"/>
</dbReference>
<dbReference type="GO" id="GO:0003677">
    <property type="term" value="F:DNA binding"/>
    <property type="evidence" value="ECO:0007669"/>
    <property type="project" value="UniProtKB-KW"/>
</dbReference>
<dbReference type="GO" id="GO:0000287">
    <property type="term" value="F:magnesium ion binding"/>
    <property type="evidence" value="ECO:0007669"/>
    <property type="project" value="UniProtKB-UniRule"/>
</dbReference>
<dbReference type="GO" id="GO:0006310">
    <property type="term" value="P:DNA recombination"/>
    <property type="evidence" value="ECO:0007669"/>
    <property type="project" value="UniProtKB-UniRule"/>
</dbReference>
<dbReference type="GO" id="GO:0006281">
    <property type="term" value="P:DNA repair"/>
    <property type="evidence" value="ECO:0007669"/>
    <property type="project" value="UniProtKB-UniRule"/>
</dbReference>
<dbReference type="CDD" id="cd16962">
    <property type="entry name" value="RuvC"/>
    <property type="match status" value="1"/>
</dbReference>
<dbReference type="FunFam" id="3.30.420.10:FF:000002">
    <property type="entry name" value="Crossover junction endodeoxyribonuclease RuvC"/>
    <property type="match status" value="1"/>
</dbReference>
<dbReference type="Gene3D" id="3.30.420.10">
    <property type="entry name" value="Ribonuclease H-like superfamily/Ribonuclease H"/>
    <property type="match status" value="1"/>
</dbReference>
<dbReference type="HAMAP" id="MF_00034">
    <property type="entry name" value="RuvC"/>
    <property type="match status" value="1"/>
</dbReference>
<dbReference type="InterPro" id="IPR012337">
    <property type="entry name" value="RNaseH-like_sf"/>
</dbReference>
<dbReference type="InterPro" id="IPR036397">
    <property type="entry name" value="RNaseH_sf"/>
</dbReference>
<dbReference type="InterPro" id="IPR020563">
    <property type="entry name" value="X-over_junc_endoDNase_Mg_BS"/>
</dbReference>
<dbReference type="InterPro" id="IPR002176">
    <property type="entry name" value="X-over_junc_endoDNase_RuvC"/>
</dbReference>
<dbReference type="NCBIfam" id="TIGR00228">
    <property type="entry name" value="ruvC"/>
    <property type="match status" value="1"/>
</dbReference>
<dbReference type="PANTHER" id="PTHR30194">
    <property type="entry name" value="CROSSOVER JUNCTION ENDODEOXYRIBONUCLEASE RUVC"/>
    <property type="match status" value="1"/>
</dbReference>
<dbReference type="PANTHER" id="PTHR30194:SF3">
    <property type="entry name" value="CROSSOVER JUNCTION ENDODEOXYRIBONUCLEASE RUVC"/>
    <property type="match status" value="1"/>
</dbReference>
<dbReference type="Pfam" id="PF02075">
    <property type="entry name" value="RuvC"/>
    <property type="match status" value="1"/>
</dbReference>
<dbReference type="PRINTS" id="PR00696">
    <property type="entry name" value="RSOLVASERUVC"/>
</dbReference>
<dbReference type="SUPFAM" id="SSF53098">
    <property type="entry name" value="Ribonuclease H-like"/>
    <property type="match status" value="1"/>
</dbReference>
<dbReference type="PROSITE" id="PS01321">
    <property type="entry name" value="RUVC"/>
    <property type="match status" value="1"/>
</dbReference>